<feature type="chain" id="PRO_0000262987" description="Putative ribose/galactose/methyl galactoside import ATP-binding protein 1">
    <location>
        <begin position="1"/>
        <end position="524"/>
    </location>
</feature>
<feature type="domain" description="ABC transporter 1" evidence="1">
    <location>
        <begin position="29"/>
        <end position="270"/>
    </location>
</feature>
<feature type="domain" description="ABC transporter 2" evidence="1">
    <location>
        <begin position="280"/>
        <end position="524"/>
    </location>
</feature>
<feature type="binding site" evidence="1">
    <location>
        <begin position="61"/>
        <end position="68"/>
    </location>
    <ligand>
        <name>ATP</name>
        <dbReference type="ChEBI" id="CHEBI:30616"/>
    </ligand>
</feature>
<proteinExistence type="inferred from homology"/>
<comment type="function">
    <text evidence="1">Part of an ABC transporter complex involved in carbohydrate import. Could be involved in ribose, galactose and/or methyl galactoside import. Responsible for energy coupling to the transport system.</text>
</comment>
<comment type="catalytic activity">
    <reaction evidence="1">
        <text>D-ribose(out) + ATP + H2O = D-ribose(in) + ADP + phosphate + H(+)</text>
        <dbReference type="Rhea" id="RHEA:29903"/>
        <dbReference type="ChEBI" id="CHEBI:15377"/>
        <dbReference type="ChEBI" id="CHEBI:15378"/>
        <dbReference type="ChEBI" id="CHEBI:30616"/>
        <dbReference type="ChEBI" id="CHEBI:43474"/>
        <dbReference type="ChEBI" id="CHEBI:47013"/>
        <dbReference type="ChEBI" id="CHEBI:456216"/>
        <dbReference type="EC" id="7.5.2.7"/>
    </reaction>
</comment>
<comment type="catalytic activity">
    <reaction evidence="1">
        <text>D-galactose(out) + ATP + H2O = D-galactose(in) + ADP + phosphate + H(+)</text>
        <dbReference type="Rhea" id="RHEA:60156"/>
        <dbReference type="ChEBI" id="CHEBI:4139"/>
        <dbReference type="ChEBI" id="CHEBI:15377"/>
        <dbReference type="ChEBI" id="CHEBI:15378"/>
        <dbReference type="ChEBI" id="CHEBI:30616"/>
        <dbReference type="ChEBI" id="CHEBI:43474"/>
        <dbReference type="ChEBI" id="CHEBI:456216"/>
        <dbReference type="EC" id="7.5.2.11"/>
    </reaction>
</comment>
<comment type="subcellular location">
    <subcellularLocation>
        <location evidence="1">Cell inner membrane</location>
        <topology evidence="1">Peripheral membrane protein</topology>
    </subcellularLocation>
</comment>
<comment type="similarity">
    <text evidence="1">Belongs to the ABC transporter superfamily. Carbohydrate importer 2 (CUT2) (TC 3.A.1.2) family.</text>
</comment>
<accession>Q2KAW9</accession>
<protein>
    <recommendedName>
        <fullName evidence="1">Putative ribose/galactose/methyl galactoside import ATP-binding protein 1</fullName>
        <ecNumber evidence="1">7.5.2.11</ecNumber>
        <ecNumber evidence="1">7.5.2.7</ecNumber>
    </recommendedName>
</protein>
<reference key="1">
    <citation type="journal article" date="2006" name="Proc. Natl. Acad. Sci. U.S.A.">
        <title>The partitioned Rhizobium etli genome: genetic and metabolic redundancy in seven interacting replicons.</title>
        <authorList>
            <person name="Gonzalez V."/>
            <person name="Santamaria R.I."/>
            <person name="Bustos P."/>
            <person name="Hernandez-Gonzalez I."/>
            <person name="Medrano-Soto A."/>
            <person name="Moreno-Hagelsieb G."/>
            <person name="Janga S.C."/>
            <person name="Ramirez M.A."/>
            <person name="Jimenez-Jacinto V."/>
            <person name="Collado-Vides J."/>
            <person name="Davila G."/>
        </authorList>
    </citation>
    <scope>NUCLEOTIDE SEQUENCE [LARGE SCALE GENOMIC DNA]</scope>
    <source>
        <strain>ATCC 51251 / DSM 11541 / JCM 21823 / NBRC 15573 / CFN 42</strain>
    </source>
</reference>
<keyword id="KW-0067">ATP-binding</keyword>
<keyword id="KW-0997">Cell inner membrane</keyword>
<keyword id="KW-1003">Cell membrane</keyword>
<keyword id="KW-0472">Membrane</keyword>
<keyword id="KW-0547">Nucleotide-binding</keyword>
<keyword id="KW-1185">Reference proteome</keyword>
<keyword id="KW-0677">Repeat</keyword>
<keyword id="KW-0762">Sugar transport</keyword>
<keyword id="KW-1278">Translocase</keyword>
<keyword id="KW-0813">Transport</keyword>
<organism>
    <name type="scientific">Rhizobium etli (strain ATCC 51251 / DSM 11541 / JCM 21823 / NBRC 15573 / CFN 42)</name>
    <dbReference type="NCBI Taxonomy" id="347834"/>
    <lineage>
        <taxon>Bacteria</taxon>
        <taxon>Pseudomonadati</taxon>
        <taxon>Pseudomonadota</taxon>
        <taxon>Alphaproteobacteria</taxon>
        <taxon>Hyphomicrobiales</taxon>
        <taxon>Rhizobiaceae</taxon>
        <taxon>Rhizobium/Agrobacterium group</taxon>
        <taxon>Rhizobium</taxon>
    </lineage>
</organism>
<dbReference type="EC" id="7.5.2.11" evidence="1"/>
<dbReference type="EC" id="7.5.2.7" evidence="1"/>
<dbReference type="EMBL" id="CP000133">
    <property type="protein sequence ID" value="ABC90017.1"/>
    <property type="molecule type" value="Genomic_DNA"/>
</dbReference>
<dbReference type="RefSeq" id="WP_011424551.1">
    <property type="nucleotide sequence ID" value="NC_007761.1"/>
</dbReference>
<dbReference type="SMR" id="Q2KAW9"/>
<dbReference type="KEGG" id="ret:RHE_CH01212"/>
<dbReference type="eggNOG" id="COG1129">
    <property type="taxonomic scope" value="Bacteria"/>
</dbReference>
<dbReference type="HOGENOM" id="CLU_000604_92_3_5"/>
<dbReference type="OrthoDB" id="9805029at2"/>
<dbReference type="Proteomes" id="UP000001936">
    <property type="component" value="Chromosome"/>
</dbReference>
<dbReference type="GO" id="GO:0005886">
    <property type="term" value="C:plasma membrane"/>
    <property type="evidence" value="ECO:0007669"/>
    <property type="project" value="UniProtKB-SubCell"/>
</dbReference>
<dbReference type="GO" id="GO:0015611">
    <property type="term" value="F:ABC-type D-ribose transporter activity"/>
    <property type="evidence" value="ECO:0007669"/>
    <property type="project" value="UniProtKB-EC"/>
</dbReference>
<dbReference type="GO" id="GO:0005524">
    <property type="term" value="F:ATP binding"/>
    <property type="evidence" value="ECO:0007669"/>
    <property type="project" value="UniProtKB-KW"/>
</dbReference>
<dbReference type="GO" id="GO:0016887">
    <property type="term" value="F:ATP hydrolysis activity"/>
    <property type="evidence" value="ECO:0007669"/>
    <property type="project" value="InterPro"/>
</dbReference>
<dbReference type="CDD" id="cd03216">
    <property type="entry name" value="ABC_Carb_Monos_I"/>
    <property type="match status" value="1"/>
</dbReference>
<dbReference type="CDD" id="cd03215">
    <property type="entry name" value="ABC_Carb_Monos_II"/>
    <property type="match status" value="1"/>
</dbReference>
<dbReference type="FunFam" id="3.40.50.300:FF:000126">
    <property type="entry name" value="Galactose/methyl galactoside import ATP-binding protein MglA"/>
    <property type="match status" value="1"/>
</dbReference>
<dbReference type="FunFam" id="3.40.50.300:FF:000127">
    <property type="entry name" value="Ribose import ATP-binding protein RbsA"/>
    <property type="match status" value="1"/>
</dbReference>
<dbReference type="Gene3D" id="3.40.50.300">
    <property type="entry name" value="P-loop containing nucleotide triphosphate hydrolases"/>
    <property type="match status" value="2"/>
</dbReference>
<dbReference type="InterPro" id="IPR003593">
    <property type="entry name" value="AAA+_ATPase"/>
</dbReference>
<dbReference type="InterPro" id="IPR050107">
    <property type="entry name" value="ABC_carbohydrate_import_ATPase"/>
</dbReference>
<dbReference type="InterPro" id="IPR003439">
    <property type="entry name" value="ABC_transporter-like_ATP-bd"/>
</dbReference>
<dbReference type="InterPro" id="IPR017871">
    <property type="entry name" value="ABC_transporter-like_CS"/>
</dbReference>
<dbReference type="InterPro" id="IPR027417">
    <property type="entry name" value="P-loop_NTPase"/>
</dbReference>
<dbReference type="PANTHER" id="PTHR43790">
    <property type="entry name" value="CARBOHYDRATE TRANSPORT ATP-BINDING PROTEIN MG119-RELATED"/>
    <property type="match status" value="1"/>
</dbReference>
<dbReference type="PANTHER" id="PTHR43790:SF3">
    <property type="entry name" value="D-ALLOSE IMPORT ATP-BINDING PROTEIN ALSA-RELATED"/>
    <property type="match status" value="1"/>
</dbReference>
<dbReference type="Pfam" id="PF00005">
    <property type="entry name" value="ABC_tran"/>
    <property type="match status" value="2"/>
</dbReference>
<dbReference type="SMART" id="SM00382">
    <property type="entry name" value="AAA"/>
    <property type="match status" value="2"/>
</dbReference>
<dbReference type="SUPFAM" id="SSF52540">
    <property type="entry name" value="P-loop containing nucleoside triphosphate hydrolases"/>
    <property type="match status" value="2"/>
</dbReference>
<dbReference type="PROSITE" id="PS00211">
    <property type="entry name" value="ABC_TRANSPORTER_1"/>
    <property type="match status" value="1"/>
</dbReference>
<dbReference type="PROSITE" id="PS50893">
    <property type="entry name" value="ABC_TRANSPORTER_2"/>
    <property type="match status" value="2"/>
</dbReference>
<dbReference type="PROSITE" id="PS51260">
    <property type="entry name" value="MGLA"/>
    <property type="match status" value="1"/>
</dbReference>
<dbReference type="PROSITE" id="PS51254">
    <property type="entry name" value="RBSA"/>
    <property type="match status" value="1"/>
</dbReference>
<name>RGMG1_RHIEC</name>
<gene>
    <name type="ordered locus">RHE_CH01212</name>
</gene>
<sequence>MSATLQRVAPLSGGEGHRTPIDSGAGFVLEMRSITKAFPGVLALDGMSLKVRAGTVHVLVGENGAGKSTLMKILSGIYAIDGGEILFRGEKLDHQSAAAALERGISMIHQELSPVLDMTIAENIFLGREPTYSRTGVLSRFVDFDRMNSDTQTLLDRLGLKYSPQTKMRDLSIATMQLIEIVKAISREASLIIMDEPTSAISDTEVAMLFRQIADLKAAGVAIIYITHKMDEIFQIADDITVMRDGQFVAAAPASEYEPAKLISQMVGRTISSIFPKEEVPIGDIVLSVENLSRDGVFDNVGFEVRAGEIVGLSGLIGAGRTEVARVIFGLDAADAGVVRLNGKPLKLTSPKDAIANGIAMVSEDRKAEGLVLCRSVGENISLANLKKFASGIFISERQEETASQRMIKMLQIKTPDTAMIVENLSGGNQQKIVLAKWLLGDLKLLILDEPTRGIDVGSKSEIHRLMTEFARQGLAIIMISSELPEILGMSDRVVVMSEGRVTGELTRAEATQENIMRLATGGH</sequence>
<evidence type="ECO:0000255" key="1">
    <source>
        <dbReference type="HAMAP-Rule" id="MF_01717"/>
    </source>
</evidence>